<organism>
    <name type="scientific">Staphylococcus haemolyticus (strain JCSC1435)</name>
    <dbReference type="NCBI Taxonomy" id="279808"/>
    <lineage>
        <taxon>Bacteria</taxon>
        <taxon>Bacillati</taxon>
        <taxon>Bacillota</taxon>
        <taxon>Bacilli</taxon>
        <taxon>Bacillales</taxon>
        <taxon>Staphylococcaceae</taxon>
        <taxon>Staphylococcus</taxon>
    </lineage>
</organism>
<gene>
    <name type="primary">aldA</name>
    <name type="ordered locus">SH0547</name>
</gene>
<comment type="catalytic activity">
    <reaction>
        <text>an aldehyde + NAD(+) + H2O = a carboxylate + NADH + 2 H(+)</text>
        <dbReference type="Rhea" id="RHEA:16185"/>
        <dbReference type="ChEBI" id="CHEBI:15377"/>
        <dbReference type="ChEBI" id="CHEBI:15378"/>
        <dbReference type="ChEBI" id="CHEBI:17478"/>
        <dbReference type="ChEBI" id="CHEBI:29067"/>
        <dbReference type="ChEBI" id="CHEBI:57540"/>
        <dbReference type="ChEBI" id="CHEBI:57945"/>
        <dbReference type="EC" id="1.2.1.3"/>
    </reaction>
</comment>
<comment type="similarity">
    <text evidence="2">Belongs to the aldehyde dehydrogenase family.</text>
</comment>
<feature type="chain" id="PRO_0000056463" description="Putative aldehyde dehydrogenase AldA">
    <location>
        <begin position="1"/>
        <end position="497"/>
    </location>
</feature>
<feature type="active site" evidence="1">
    <location>
        <position position="257"/>
    </location>
</feature>
<feature type="active site" evidence="1">
    <location>
        <position position="291"/>
    </location>
</feature>
<feature type="binding site" evidence="1">
    <location>
        <begin position="213"/>
        <end position="219"/>
    </location>
    <ligand>
        <name>NAD(+)</name>
        <dbReference type="ChEBI" id="CHEBI:57540"/>
    </ligand>
</feature>
<name>ALDA_STAHJ</name>
<keyword id="KW-0520">NAD</keyword>
<keyword id="KW-0560">Oxidoreductase</keyword>
<protein>
    <recommendedName>
        <fullName>Putative aldehyde dehydrogenase AldA</fullName>
        <ecNumber>1.2.1.3</ecNumber>
    </recommendedName>
</protein>
<dbReference type="EC" id="1.2.1.3"/>
<dbReference type="EMBL" id="AP006716">
    <property type="protein sequence ID" value="BAE03856.1"/>
    <property type="molecule type" value="Genomic_DNA"/>
</dbReference>
<dbReference type="RefSeq" id="WP_011274872.1">
    <property type="nucleotide sequence ID" value="NC_007168.1"/>
</dbReference>
<dbReference type="SMR" id="Q4L919"/>
<dbReference type="KEGG" id="sha:SH0547"/>
<dbReference type="eggNOG" id="COG1012">
    <property type="taxonomic scope" value="Bacteria"/>
</dbReference>
<dbReference type="HOGENOM" id="CLU_005391_0_1_9"/>
<dbReference type="OrthoDB" id="9762913at2"/>
<dbReference type="Proteomes" id="UP000000543">
    <property type="component" value="Chromosome"/>
</dbReference>
<dbReference type="GO" id="GO:0004029">
    <property type="term" value="F:aldehyde dehydrogenase (NAD+) activity"/>
    <property type="evidence" value="ECO:0007669"/>
    <property type="project" value="UniProtKB-EC"/>
</dbReference>
<dbReference type="FunFam" id="3.40.309.10:FF:000012">
    <property type="entry name" value="Betaine aldehyde dehydrogenase"/>
    <property type="match status" value="1"/>
</dbReference>
<dbReference type="FunFam" id="3.40.605.10:FF:000007">
    <property type="entry name" value="NAD/NADP-dependent betaine aldehyde dehydrogenase"/>
    <property type="match status" value="1"/>
</dbReference>
<dbReference type="Gene3D" id="3.40.605.10">
    <property type="entry name" value="Aldehyde Dehydrogenase, Chain A, domain 1"/>
    <property type="match status" value="1"/>
</dbReference>
<dbReference type="Gene3D" id="3.40.309.10">
    <property type="entry name" value="Aldehyde Dehydrogenase, Chain A, domain 2"/>
    <property type="match status" value="1"/>
</dbReference>
<dbReference type="InterPro" id="IPR016161">
    <property type="entry name" value="Ald_DH/histidinol_DH"/>
</dbReference>
<dbReference type="InterPro" id="IPR016163">
    <property type="entry name" value="Ald_DH_C"/>
</dbReference>
<dbReference type="InterPro" id="IPR016160">
    <property type="entry name" value="Ald_DH_CS_CYS"/>
</dbReference>
<dbReference type="InterPro" id="IPR029510">
    <property type="entry name" value="Ald_DH_CS_GLU"/>
</dbReference>
<dbReference type="InterPro" id="IPR016162">
    <property type="entry name" value="Ald_DH_N"/>
</dbReference>
<dbReference type="InterPro" id="IPR015590">
    <property type="entry name" value="Aldehyde_DH_dom"/>
</dbReference>
<dbReference type="PANTHER" id="PTHR11699">
    <property type="entry name" value="ALDEHYDE DEHYDROGENASE-RELATED"/>
    <property type="match status" value="1"/>
</dbReference>
<dbReference type="Pfam" id="PF00171">
    <property type="entry name" value="Aldedh"/>
    <property type="match status" value="1"/>
</dbReference>
<dbReference type="SUPFAM" id="SSF53720">
    <property type="entry name" value="ALDH-like"/>
    <property type="match status" value="1"/>
</dbReference>
<dbReference type="PROSITE" id="PS00070">
    <property type="entry name" value="ALDEHYDE_DEHYDR_CYS"/>
    <property type="match status" value="1"/>
</dbReference>
<dbReference type="PROSITE" id="PS00687">
    <property type="entry name" value="ALDEHYDE_DEHYDR_GLU"/>
    <property type="match status" value="1"/>
</dbReference>
<proteinExistence type="inferred from homology"/>
<sequence length="497" mass="54119">MAKVNVRDFIEEQYGLFINGEFQASESGDTLTVTNPANGEDLAKVAKASKSDVDKAVQAAQDAFDSWSKTSKEERADYLLEISRRIHEKVEHFATIESLQNGKPYRETSTIDVPLTANQFKYFASVLTTDEGSVNEIDENTMSLVVNEPVGVVGAVVAWNFPILLASWKLAPALAAGNTIVIQPSSSTPLSLIELAKIFQEVLPKGVVNVLTGKGSESGDAIFNHEGVNKLSFTGSTDVGYGVAKAGAERIVPTTLELGGKSANIIFDDANLDQVVEGAQLGILFNQGEVCSAGSRLLVQSSIYDKVMPKLKEAFENIKVGDPFDEDVKMSAQTGPEQLEKIESYVKIAEEDSNANILTGGHRLTDNGRDKGYFFEPTIIEIKDNSHQLAQEEIFGPVVVVEKFEDEAEAIKIANDSEYGLAGGIFTTNINRALNVAKAMRTGRIWINTYNQFPAGAPFGGYKKSGIGREIYKDAIKNYQQVKNIFIDTSNQTKGLY</sequence>
<evidence type="ECO:0000250" key="1"/>
<evidence type="ECO:0000305" key="2"/>
<reference key="1">
    <citation type="journal article" date="2005" name="J. Bacteriol.">
        <title>Whole-genome sequencing of Staphylococcus haemolyticus uncovers the extreme plasticity of its genome and the evolution of human-colonizing staphylococcal species.</title>
        <authorList>
            <person name="Takeuchi F."/>
            <person name="Watanabe S."/>
            <person name="Baba T."/>
            <person name="Yuzawa H."/>
            <person name="Ito T."/>
            <person name="Morimoto Y."/>
            <person name="Kuroda M."/>
            <person name="Cui L."/>
            <person name="Takahashi M."/>
            <person name="Ankai A."/>
            <person name="Baba S."/>
            <person name="Fukui S."/>
            <person name="Lee J.C."/>
            <person name="Hiramatsu K."/>
        </authorList>
    </citation>
    <scope>NUCLEOTIDE SEQUENCE [LARGE SCALE GENOMIC DNA]</scope>
    <source>
        <strain>JCSC1435</strain>
    </source>
</reference>
<accession>Q4L919</accession>